<keyword id="KW-0002">3D-structure</keyword>
<keyword id="KW-0963">Cytoplasm</keyword>
<keyword id="KW-0240">DNA-directed RNA polymerase</keyword>
<keyword id="KW-0548">Nucleotidyltransferase</keyword>
<keyword id="KW-1185">Reference proteome</keyword>
<keyword id="KW-0804">Transcription</keyword>
<keyword id="KW-0808">Transferase</keyword>
<feature type="chain" id="PRO_0000146104" description="DNA-directed RNA polymerase subunit Rpo5">
    <location>
        <begin position="1"/>
        <end position="84"/>
    </location>
</feature>
<feature type="strand" evidence="6">
    <location>
        <begin position="14"/>
        <end position="16"/>
    </location>
</feature>
<feature type="turn" evidence="6">
    <location>
        <begin position="25"/>
        <end position="27"/>
    </location>
</feature>
<feature type="helix" evidence="6">
    <location>
        <begin position="28"/>
        <end position="34"/>
    </location>
</feature>
<feature type="strand" evidence="6">
    <location>
        <begin position="41"/>
        <end position="43"/>
    </location>
</feature>
<feature type="turn" evidence="6">
    <location>
        <begin position="50"/>
        <end position="56"/>
    </location>
</feature>
<feature type="strand" evidence="7">
    <location>
        <begin position="59"/>
        <end position="61"/>
    </location>
</feature>
<feature type="strand" evidence="6">
    <location>
        <begin position="63"/>
        <end position="67"/>
    </location>
</feature>
<feature type="strand" evidence="6">
    <location>
        <begin position="70"/>
        <end position="73"/>
    </location>
</feature>
<feature type="strand" evidence="6">
    <location>
        <begin position="75"/>
        <end position="78"/>
    </location>
</feature>
<comment type="function">
    <text evidence="1">DNA-dependent RNA polymerase (RNAP) catalyzes the transcription of DNA into RNA using the four ribonucleoside triphosphates as substrates.</text>
</comment>
<comment type="catalytic activity">
    <reaction evidence="1">
        <text>RNA(n) + a ribonucleoside 5'-triphosphate = RNA(n+1) + diphosphate</text>
        <dbReference type="Rhea" id="RHEA:21248"/>
        <dbReference type="Rhea" id="RHEA-COMP:14527"/>
        <dbReference type="Rhea" id="RHEA-COMP:17342"/>
        <dbReference type="ChEBI" id="CHEBI:33019"/>
        <dbReference type="ChEBI" id="CHEBI:61557"/>
        <dbReference type="ChEBI" id="CHEBI:140395"/>
        <dbReference type="EC" id="2.7.7.6"/>
    </reaction>
</comment>
<comment type="subunit">
    <text evidence="2">Part of the 13-subunit RNA polymerase complex.</text>
</comment>
<comment type="subcellular location">
    <subcellularLocation>
        <location evidence="1">Cytoplasm</location>
    </subcellularLocation>
</comment>
<comment type="similarity">
    <text evidence="1">Belongs to the archaeal Rpo5/eukaryotic RPB5 RNA polymerase subunit family.</text>
</comment>
<proteinExistence type="evidence at protein level"/>
<evidence type="ECO:0000255" key="1">
    <source>
        <dbReference type="HAMAP-Rule" id="MF_00025"/>
    </source>
</evidence>
<evidence type="ECO:0000269" key="2">
    <source>
    </source>
</evidence>
<evidence type="ECO:0000303" key="3">
    <source>
    </source>
</evidence>
<evidence type="ECO:0007744" key="4">
    <source>
        <dbReference type="PDB" id="2PMZ"/>
    </source>
</evidence>
<evidence type="ECO:0007744" key="5">
    <source>
        <dbReference type="PDB" id="3HKZ"/>
    </source>
</evidence>
<evidence type="ECO:0007829" key="6">
    <source>
        <dbReference type="PDB" id="2PMZ"/>
    </source>
</evidence>
<evidence type="ECO:0007829" key="7">
    <source>
        <dbReference type="PDB" id="3HKZ"/>
    </source>
</evidence>
<reference key="1">
    <citation type="journal article" date="2001" name="Proc. Natl. Acad. Sci. U.S.A.">
        <title>The complete genome of the crenarchaeon Sulfolobus solfataricus P2.</title>
        <authorList>
            <person name="She Q."/>
            <person name="Singh R.K."/>
            <person name="Confalonieri F."/>
            <person name="Zivanovic Y."/>
            <person name="Allard G."/>
            <person name="Awayez M.J."/>
            <person name="Chan-Weiher C.C.-Y."/>
            <person name="Clausen I.G."/>
            <person name="Curtis B.A."/>
            <person name="De Moors A."/>
            <person name="Erauso G."/>
            <person name="Fletcher C."/>
            <person name="Gordon P.M.K."/>
            <person name="Heikamp-de Jong I."/>
            <person name="Jeffries A.C."/>
            <person name="Kozera C.J."/>
            <person name="Medina N."/>
            <person name="Peng X."/>
            <person name="Thi-Ngoc H.P."/>
            <person name="Redder P."/>
            <person name="Schenk M.E."/>
            <person name="Theriault C."/>
            <person name="Tolstrup N."/>
            <person name="Charlebois R.L."/>
            <person name="Doolittle W.F."/>
            <person name="Duguet M."/>
            <person name="Gaasterland T."/>
            <person name="Garrett R.A."/>
            <person name="Ragan M.A."/>
            <person name="Sensen C.W."/>
            <person name="Van der Oost J."/>
        </authorList>
    </citation>
    <scope>NUCLEOTIDE SEQUENCE [LARGE SCALE GENOMIC DNA]</scope>
    <source>
        <strain>ATCC 35092 / DSM 1617 / JCM 11322 / P2</strain>
    </source>
</reference>
<reference evidence="4 5" key="2">
    <citation type="journal article" date="2008" name="Nature">
        <title>The X-ray crystal structure of RNA polymerase from Archaea.</title>
        <authorList>
            <person name="Hirata A."/>
            <person name="Klein B.J."/>
            <person name="Murakami K.S."/>
        </authorList>
    </citation>
    <scope>X-RAY CRYSTALLOGRAPHY (3.4 ANGSTROMS) OF THE RNA POLYMERASE COMPLEX</scope>
    <scope>SUBUNIT</scope>
    <source>
        <strain>ATCC 35092 / DSM 1617 / JCM 11322 / P2</strain>
    </source>
</reference>
<dbReference type="EC" id="2.7.7.6" evidence="1"/>
<dbReference type="EMBL" id="AE006641">
    <property type="protein sequence ID" value="AAK40569.1"/>
    <property type="molecule type" value="Genomic_DNA"/>
</dbReference>
<dbReference type="PIR" id="B90164">
    <property type="entry name" value="B90164"/>
</dbReference>
<dbReference type="RefSeq" id="WP_009990480.1">
    <property type="nucleotide sequence ID" value="NC_002754.1"/>
</dbReference>
<dbReference type="PDB" id="2PMZ">
    <property type="method" value="X-ray"/>
    <property type="resolution" value="3.40 A"/>
    <property type="chains" value="H/V=1-84"/>
</dbReference>
<dbReference type="PDB" id="3HKZ">
    <property type="method" value="X-ray"/>
    <property type="resolution" value="3.40 A"/>
    <property type="chains" value="H/T=1-84"/>
</dbReference>
<dbReference type="PDBsum" id="2PMZ"/>
<dbReference type="PDBsum" id="3HKZ"/>
<dbReference type="SMR" id="Q980Q9"/>
<dbReference type="DIP" id="DIP-60641N"/>
<dbReference type="FunCoup" id="Q980Q9">
    <property type="interactions" value="10"/>
</dbReference>
<dbReference type="IntAct" id="Q980Q9">
    <property type="interactions" value="1"/>
</dbReference>
<dbReference type="STRING" id="273057.SSO5468"/>
<dbReference type="PaxDb" id="273057-SSO5468"/>
<dbReference type="EnsemblBacteria" id="AAK40569">
    <property type="protein sequence ID" value="AAK40569"/>
    <property type="gene ID" value="SSO5468"/>
</dbReference>
<dbReference type="KEGG" id="sso:SSO5468"/>
<dbReference type="PATRIC" id="fig|273057.12.peg.224"/>
<dbReference type="eggNOG" id="arCOG04258">
    <property type="taxonomic scope" value="Archaea"/>
</dbReference>
<dbReference type="HOGENOM" id="CLU_058320_4_0_2"/>
<dbReference type="InParanoid" id="Q980Q9"/>
<dbReference type="PhylomeDB" id="Q980Q9"/>
<dbReference type="BRENDA" id="2.7.7.6">
    <property type="organism ID" value="6163"/>
</dbReference>
<dbReference type="EvolutionaryTrace" id="Q980Q9"/>
<dbReference type="Proteomes" id="UP000001974">
    <property type="component" value="Chromosome"/>
</dbReference>
<dbReference type="GO" id="GO:0005737">
    <property type="term" value="C:cytoplasm"/>
    <property type="evidence" value="ECO:0007669"/>
    <property type="project" value="UniProtKB-SubCell"/>
</dbReference>
<dbReference type="GO" id="GO:0000428">
    <property type="term" value="C:DNA-directed RNA polymerase complex"/>
    <property type="evidence" value="ECO:0000314"/>
    <property type="project" value="UniProtKB"/>
</dbReference>
<dbReference type="GO" id="GO:0003677">
    <property type="term" value="F:DNA binding"/>
    <property type="evidence" value="ECO:0007669"/>
    <property type="project" value="InterPro"/>
</dbReference>
<dbReference type="GO" id="GO:0003899">
    <property type="term" value="F:DNA-directed RNA polymerase activity"/>
    <property type="evidence" value="ECO:0007669"/>
    <property type="project" value="UniProtKB-UniRule"/>
</dbReference>
<dbReference type="GO" id="GO:0006351">
    <property type="term" value="P:DNA-templated transcription"/>
    <property type="evidence" value="ECO:0007669"/>
    <property type="project" value="UniProtKB-UniRule"/>
</dbReference>
<dbReference type="Gene3D" id="3.90.940.20">
    <property type="entry name" value="RPB5-like RNA polymerase subunit"/>
    <property type="match status" value="1"/>
</dbReference>
<dbReference type="HAMAP" id="MF_00025">
    <property type="entry name" value="RNApol_Rpo5_RPB5"/>
    <property type="match status" value="1"/>
</dbReference>
<dbReference type="InterPro" id="IPR014381">
    <property type="entry name" value="Arch_Rpo5/euc_Rpb5"/>
</dbReference>
<dbReference type="InterPro" id="IPR000783">
    <property type="entry name" value="RNA_pol_subH/Rpb5_C"/>
</dbReference>
<dbReference type="InterPro" id="IPR020608">
    <property type="entry name" value="RNA_pol_subH/Rpb5_CS"/>
</dbReference>
<dbReference type="InterPro" id="IPR035913">
    <property type="entry name" value="RPB5-like_sf"/>
</dbReference>
<dbReference type="NCBIfam" id="NF007129">
    <property type="entry name" value="PRK09570.1"/>
    <property type="match status" value="1"/>
</dbReference>
<dbReference type="PANTHER" id="PTHR10535">
    <property type="entry name" value="DNA-DIRECTED RNA POLYMERASES I, II, AND III SUBUNIT RPABC1"/>
    <property type="match status" value="1"/>
</dbReference>
<dbReference type="PANTHER" id="PTHR10535:SF0">
    <property type="entry name" value="DNA-DIRECTED RNA POLYMERASES I, II, AND III SUBUNIT RPABC1"/>
    <property type="match status" value="1"/>
</dbReference>
<dbReference type="Pfam" id="PF01191">
    <property type="entry name" value="RNA_pol_Rpb5_C"/>
    <property type="match status" value="1"/>
</dbReference>
<dbReference type="SUPFAM" id="SSF55287">
    <property type="entry name" value="RPB5-like RNA polymerase subunit"/>
    <property type="match status" value="1"/>
</dbReference>
<dbReference type="PROSITE" id="PS01110">
    <property type="entry name" value="RNA_POL_H_23KD"/>
    <property type="match status" value="1"/>
</dbReference>
<name>RPO5_SACS2</name>
<gene>
    <name evidence="1" type="primary">rpo5</name>
    <name evidence="1 3" type="synonym">rpoH</name>
    <name type="ordered locus">SSO5468</name>
</gene>
<protein>
    <recommendedName>
        <fullName evidence="1">DNA-directed RNA polymerase subunit Rpo5</fullName>
        <ecNumber evidence="1">2.7.7.6</ecNumber>
    </recommendedName>
    <alternativeName>
        <fullName evidence="1">DNA-directed RNA polymerase subunit H</fullName>
    </alternativeName>
</protein>
<sequence>MRGSSNKKIDPRIHYLVPKHEVLNIDEAYKILKELGIRPEQLPWIRASDPVARSINAKPGDIIRIIRKSQLYGEVVSYRYVISG</sequence>
<organism>
    <name type="scientific">Saccharolobus solfataricus (strain ATCC 35092 / DSM 1617 / JCM 11322 / P2)</name>
    <name type="common">Sulfolobus solfataricus</name>
    <dbReference type="NCBI Taxonomy" id="273057"/>
    <lineage>
        <taxon>Archaea</taxon>
        <taxon>Thermoproteota</taxon>
        <taxon>Thermoprotei</taxon>
        <taxon>Sulfolobales</taxon>
        <taxon>Sulfolobaceae</taxon>
        <taxon>Saccharolobus</taxon>
    </lineage>
</organism>
<accession>Q980Q9</accession>